<protein>
    <recommendedName>
        <fullName evidence="2">Factor VII-activating protease</fullName>
        <shortName evidence="2">FSAP</shortName>
        <ecNumber evidence="2">3.4.21.-</ecNumber>
    </recommendedName>
    <alternativeName>
        <fullName evidence="2">FVII activator</fullName>
    </alternativeName>
    <alternativeName>
        <fullName evidence="2">Hepatocyte growth factor activator-like protein</fullName>
    </alternativeName>
    <alternativeName>
        <fullName>Hyaluronan-binding protein 2</fullName>
    </alternativeName>
    <alternativeName>
        <fullName evidence="2">Plasma hyaluronan-binding protein</fullName>
        <shortName evidence="2">PHBP</shortName>
    </alternativeName>
    <component>
        <recommendedName>
            <fullName evidence="2">Factor VII-activating protease 50 kDa N-terminal heavy chain</fullName>
        </recommendedName>
    </component>
    <component>
        <recommendedName>
            <fullName evidence="2">Factor VII-activating protease 50 kDa N-terminal heavy chain alternate form</fullName>
        </recommendedName>
    </component>
    <component>
        <recommendedName>
            <fullName evidence="2">Factor VII-activating protease 27 kDa C-terminal light chain</fullName>
        </recommendedName>
    </component>
    <component>
        <recommendedName>
            <fullName evidence="2">Factor VII-activating protease 27 kDa C-terminal light chain alternate form</fullName>
        </recommendedName>
    </component>
</protein>
<dbReference type="EC" id="3.4.21.-" evidence="2"/>
<dbReference type="EMBL" id="BT020777">
    <property type="protein sequence ID" value="AAX08794.1"/>
    <property type="molecule type" value="mRNA"/>
</dbReference>
<dbReference type="EMBL" id="BC105202">
    <property type="protein sequence ID" value="AAI05203.1"/>
    <property type="molecule type" value="mRNA"/>
</dbReference>
<dbReference type="RefSeq" id="NP_001014868.1">
    <property type="nucleotide sequence ID" value="NM_001014868.1"/>
</dbReference>
<dbReference type="SMR" id="Q5E9Z2"/>
<dbReference type="FunCoup" id="Q5E9Z2">
    <property type="interactions" value="73"/>
</dbReference>
<dbReference type="STRING" id="9913.ENSBTAP00000025732"/>
<dbReference type="MEROPS" id="S01.033"/>
<dbReference type="GlyCosmos" id="Q5E9Z2">
    <property type="glycosylation" value="1 site, No reported glycans"/>
</dbReference>
<dbReference type="GlyGen" id="Q5E9Z2">
    <property type="glycosylation" value="1 site"/>
</dbReference>
<dbReference type="PaxDb" id="9913-ENSBTAP00000025732"/>
<dbReference type="Ensembl" id="ENSBTAT00000025732.4">
    <property type="protein sequence ID" value="ENSBTAP00000025732.3"/>
    <property type="gene ID" value="ENSBTAG00000019322.6"/>
</dbReference>
<dbReference type="GeneID" id="507993"/>
<dbReference type="KEGG" id="bta:507993"/>
<dbReference type="CTD" id="3026"/>
<dbReference type="VEuPathDB" id="HostDB:ENSBTAG00000019322"/>
<dbReference type="VGNC" id="VGNC:55955">
    <property type="gene designation" value="HABP2"/>
</dbReference>
<dbReference type="eggNOG" id="KOG1217">
    <property type="taxonomic scope" value="Eukaryota"/>
</dbReference>
<dbReference type="eggNOG" id="KOG3627">
    <property type="taxonomic scope" value="Eukaryota"/>
</dbReference>
<dbReference type="GeneTree" id="ENSGT00940000157814"/>
<dbReference type="HOGENOM" id="CLU_006842_18_2_1"/>
<dbReference type="InParanoid" id="Q5E9Z2"/>
<dbReference type="OMA" id="GKTACGF"/>
<dbReference type="OrthoDB" id="9937281at2759"/>
<dbReference type="TreeFam" id="TF329901"/>
<dbReference type="Proteomes" id="UP000009136">
    <property type="component" value="Chromosome 26"/>
</dbReference>
<dbReference type="Bgee" id="ENSBTAG00000019322">
    <property type="expression patterns" value="Expressed in laryngeal cartilage and 40 other cell types or tissues"/>
</dbReference>
<dbReference type="GO" id="GO:0005615">
    <property type="term" value="C:extracellular space"/>
    <property type="evidence" value="ECO:0000318"/>
    <property type="project" value="GO_Central"/>
</dbReference>
<dbReference type="GO" id="GO:0005509">
    <property type="term" value="F:calcium ion binding"/>
    <property type="evidence" value="ECO:0007669"/>
    <property type="project" value="InterPro"/>
</dbReference>
<dbReference type="GO" id="GO:0004252">
    <property type="term" value="F:serine-type endopeptidase activity"/>
    <property type="evidence" value="ECO:0000318"/>
    <property type="project" value="GO_Central"/>
</dbReference>
<dbReference type="GO" id="GO:0007596">
    <property type="term" value="P:blood coagulation"/>
    <property type="evidence" value="ECO:0000318"/>
    <property type="project" value="GO_Central"/>
</dbReference>
<dbReference type="GO" id="GO:0006508">
    <property type="term" value="P:proteolysis"/>
    <property type="evidence" value="ECO:0007669"/>
    <property type="project" value="UniProtKB-KW"/>
</dbReference>
<dbReference type="CDD" id="cd00054">
    <property type="entry name" value="EGF_CA"/>
    <property type="match status" value="2"/>
</dbReference>
<dbReference type="CDD" id="cd00108">
    <property type="entry name" value="KR"/>
    <property type="match status" value="1"/>
</dbReference>
<dbReference type="CDD" id="cd00190">
    <property type="entry name" value="Tryp_SPc"/>
    <property type="match status" value="1"/>
</dbReference>
<dbReference type="FunFam" id="2.10.25.10:FF:000571">
    <property type="entry name" value="Hyaluronan-binding protein 2"/>
    <property type="match status" value="1"/>
</dbReference>
<dbReference type="FunFam" id="2.40.10.10:FF:000069">
    <property type="entry name" value="Hyaluronan-binding protein 2"/>
    <property type="match status" value="1"/>
</dbReference>
<dbReference type="FunFam" id="2.10.25.10:FF:000463">
    <property type="entry name" value="hyaluronan-binding protein 2"/>
    <property type="match status" value="1"/>
</dbReference>
<dbReference type="FunFam" id="2.40.20.10:FF:000001">
    <property type="entry name" value="Urokinase-type plasminogen activator"/>
    <property type="match status" value="1"/>
</dbReference>
<dbReference type="Gene3D" id="2.10.25.10">
    <property type="entry name" value="Laminin"/>
    <property type="match status" value="2"/>
</dbReference>
<dbReference type="Gene3D" id="2.40.20.10">
    <property type="entry name" value="Plasminogen Kringle 4"/>
    <property type="match status" value="1"/>
</dbReference>
<dbReference type="Gene3D" id="2.40.10.10">
    <property type="entry name" value="Trypsin-like serine proteases"/>
    <property type="match status" value="1"/>
</dbReference>
<dbReference type="InterPro" id="IPR001881">
    <property type="entry name" value="EGF-like_Ca-bd_dom"/>
</dbReference>
<dbReference type="InterPro" id="IPR000742">
    <property type="entry name" value="EGF-like_dom"/>
</dbReference>
<dbReference type="InterPro" id="IPR000001">
    <property type="entry name" value="Kringle"/>
</dbReference>
<dbReference type="InterPro" id="IPR013806">
    <property type="entry name" value="Kringle-like"/>
</dbReference>
<dbReference type="InterPro" id="IPR018056">
    <property type="entry name" value="Kringle_CS"/>
</dbReference>
<dbReference type="InterPro" id="IPR038178">
    <property type="entry name" value="Kringle_sf"/>
</dbReference>
<dbReference type="InterPro" id="IPR009003">
    <property type="entry name" value="Peptidase_S1_PA"/>
</dbReference>
<dbReference type="InterPro" id="IPR043504">
    <property type="entry name" value="Peptidase_S1_PA_chymotrypsin"/>
</dbReference>
<dbReference type="InterPro" id="IPR001314">
    <property type="entry name" value="Peptidase_S1A"/>
</dbReference>
<dbReference type="InterPro" id="IPR050127">
    <property type="entry name" value="Serine_Proteases_S1"/>
</dbReference>
<dbReference type="InterPro" id="IPR001254">
    <property type="entry name" value="Trypsin_dom"/>
</dbReference>
<dbReference type="InterPro" id="IPR018114">
    <property type="entry name" value="TRYPSIN_HIS"/>
</dbReference>
<dbReference type="InterPro" id="IPR033116">
    <property type="entry name" value="TRYPSIN_SER"/>
</dbReference>
<dbReference type="PANTHER" id="PTHR24264:SF40">
    <property type="entry name" value="HYALURONAN-BINDING PROTEIN 2"/>
    <property type="match status" value="1"/>
</dbReference>
<dbReference type="PANTHER" id="PTHR24264">
    <property type="entry name" value="TRYPSIN-RELATED"/>
    <property type="match status" value="1"/>
</dbReference>
<dbReference type="Pfam" id="PF00008">
    <property type="entry name" value="EGF"/>
    <property type="match status" value="2"/>
</dbReference>
<dbReference type="Pfam" id="PF00051">
    <property type="entry name" value="Kringle"/>
    <property type="match status" value="1"/>
</dbReference>
<dbReference type="Pfam" id="PF00089">
    <property type="entry name" value="Trypsin"/>
    <property type="match status" value="1"/>
</dbReference>
<dbReference type="PRINTS" id="PR00722">
    <property type="entry name" value="CHYMOTRYPSIN"/>
</dbReference>
<dbReference type="PRINTS" id="PR00018">
    <property type="entry name" value="KRINGLE"/>
</dbReference>
<dbReference type="SMART" id="SM00181">
    <property type="entry name" value="EGF"/>
    <property type="match status" value="3"/>
</dbReference>
<dbReference type="SMART" id="SM00179">
    <property type="entry name" value="EGF_CA"/>
    <property type="match status" value="2"/>
</dbReference>
<dbReference type="SMART" id="SM00130">
    <property type="entry name" value="KR"/>
    <property type="match status" value="1"/>
</dbReference>
<dbReference type="SMART" id="SM00020">
    <property type="entry name" value="Tryp_SPc"/>
    <property type="match status" value="1"/>
</dbReference>
<dbReference type="SUPFAM" id="SSF57196">
    <property type="entry name" value="EGF/Laminin"/>
    <property type="match status" value="1"/>
</dbReference>
<dbReference type="SUPFAM" id="SSF57440">
    <property type="entry name" value="Kringle-like"/>
    <property type="match status" value="1"/>
</dbReference>
<dbReference type="SUPFAM" id="SSF50494">
    <property type="entry name" value="Trypsin-like serine proteases"/>
    <property type="match status" value="1"/>
</dbReference>
<dbReference type="PROSITE" id="PS00022">
    <property type="entry name" value="EGF_1"/>
    <property type="match status" value="3"/>
</dbReference>
<dbReference type="PROSITE" id="PS01186">
    <property type="entry name" value="EGF_2"/>
    <property type="match status" value="2"/>
</dbReference>
<dbReference type="PROSITE" id="PS50026">
    <property type="entry name" value="EGF_3"/>
    <property type="match status" value="3"/>
</dbReference>
<dbReference type="PROSITE" id="PS00021">
    <property type="entry name" value="KRINGLE_1"/>
    <property type="match status" value="1"/>
</dbReference>
<dbReference type="PROSITE" id="PS50070">
    <property type="entry name" value="KRINGLE_2"/>
    <property type="match status" value="1"/>
</dbReference>
<dbReference type="PROSITE" id="PS50240">
    <property type="entry name" value="TRYPSIN_DOM"/>
    <property type="match status" value="1"/>
</dbReference>
<dbReference type="PROSITE" id="PS00134">
    <property type="entry name" value="TRYPSIN_HIS"/>
    <property type="match status" value="1"/>
</dbReference>
<dbReference type="PROSITE" id="PS00135">
    <property type="entry name" value="TRYPSIN_SER"/>
    <property type="match status" value="1"/>
</dbReference>
<reference key="1">
    <citation type="journal article" date="2005" name="BMC Genomics">
        <title>Characterization of 954 bovine full-CDS cDNA sequences.</title>
        <authorList>
            <person name="Harhay G.P."/>
            <person name="Sonstegard T.S."/>
            <person name="Keele J.W."/>
            <person name="Heaton M.P."/>
            <person name="Clawson M.L."/>
            <person name="Snelling W.M."/>
            <person name="Wiedmann R.T."/>
            <person name="Van Tassell C.P."/>
            <person name="Smith T.P.L."/>
        </authorList>
    </citation>
    <scope>NUCLEOTIDE SEQUENCE [LARGE SCALE MRNA]</scope>
</reference>
<reference key="2">
    <citation type="submission" date="2005-09" db="EMBL/GenBank/DDBJ databases">
        <authorList>
            <consortium name="NIH - Mammalian Gene Collection (MGC) project"/>
        </authorList>
    </citation>
    <scope>NUCLEOTIDE SEQUENCE [LARGE SCALE MRNA]</scope>
    <source>
        <strain>Hereford</strain>
        <tissue>Fetal liver</tissue>
    </source>
</reference>
<name>HABP2_BOVIN</name>
<gene>
    <name type="primary">HABP2</name>
</gene>
<organism>
    <name type="scientific">Bos taurus</name>
    <name type="common">Bovine</name>
    <dbReference type="NCBI Taxonomy" id="9913"/>
    <lineage>
        <taxon>Eukaryota</taxon>
        <taxon>Metazoa</taxon>
        <taxon>Chordata</taxon>
        <taxon>Craniata</taxon>
        <taxon>Vertebrata</taxon>
        <taxon>Euteleostomi</taxon>
        <taxon>Mammalia</taxon>
        <taxon>Eutheria</taxon>
        <taxon>Laurasiatheria</taxon>
        <taxon>Artiodactyla</taxon>
        <taxon>Ruminantia</taxon>
        <taxon>Pecora</taxon>
        <taxon>Bovidae</taxon>
        <taxon>Bovinae</taxon>
        <taxon>Bos</taxon>
    </lineage>
</organism>
<feature type="signal peptide" evidence="2">
    <location>
        <begin position="1"/>
        <end position="23"/>
    </location>
</feature>
<feature type="chain" id="PRO_0000027895" description="Factor VII-activating protease 50 kDa N-terminal heavy chain" evidence="2">
    <location>
        <begin position="24"/>
        <end position="311"/>
    </location>
</feature>
<feature type="chain" id="PRO_0000027896" description="Factor VII-activating protease 50 kDa N-terminal heavy chain alternate form" evidence="2">
    <location>
        <begin position="28"/>
        <end position="311"/>
    </location>
</feature>
<feature type="chain" id="PRO_0000027897" description="Factor VII-activating protease 27 kDa C-terminal light chain" evidence="2">
    <location>
        <begin position="312"/>
        <end position="558"/>
    </location>
</feature>
<feature type="chain" id="PRO_0000027898" description="Factor VII-activating protease 27 kDa C-terminal light chain alternate form" evidence="2">
    <location>
        <begin position="318"/>
        <end position="558"/>
    </location>
</feature>
<feature type="domain" description="EGF-like 1" evidence="4">
    <location>
        <begin position="71"/>
        <end position="107"/>
    </location>
</feature>
<feature type="domain" description="EGF-like 2" evidence="4">
    <location>
        <begin position="109"/>
        <end position="146"/>
    </location>
</feature>
<feature type="domain" description="EGF-like 3" evidence="4">
    <location>
        <begin position="148"/>
        <end position="186"/>
    </location>
</feature>
<feature type="domain" description="Kringle" evidence="5">
    <location>
        <begin position="191"/>
        <end position="274"/>
    </location>
</feature>
<feature type="domain" description="Peptidase S1" evidence="6">
    <location>
        <begin position="312"/>
        <end position="553"/>
    </location>
</feature>
<feature type="active site" description="Charge relay system" evidence="1 6">
    <location>
        <position position="360"/>
    </location>
</feature>
<feature type="active site" description="Charge relay system" evidence="1 6">
    <location>
        <position position="409"/>
    </location>
</feature>
<feature type="active site" description="Charge relay system" evidence="1 6">
    <location>
        <position position="507"/>
    </location>
</feature>
<feature type="site" description="Cleavage" evidence="2">
    <location>
        <begin position="478"/>
        <end position="479"/>
    </location>
</feature>
<feature type="glycosylation site" description="N-linked (GlcNAc...) asparagine" evidence="3">
    <location>
        <position position="54"/>
    </location>
</feature>
<feature type="disulfide bond" evidence="4">
    <location>
        <begin position="75"/>
        <end position="86"/>
    </location>
</feature>
<feature type="disulfide bond" evidence="4">
    <location>
        <begin position="80"/>
        <end position="95"/>
    </location>
</feature>
<feature type="disulfide bond" evidence="4">
    <location>
        <begin position="97"/>
        <end position="106"/>
    </location>
</feature>
<feature type="disulfide bond" evidence="4">
    <location>
        <begin position="113"/>
        <end position="123"/>
    </location>
</feature>
<feature type="disulfide bond" evidence="4">
    <location>
        <begin position="118"/>
        <end position="134"/>
    </location>
</feature>
<feature type="disulfide bond" evidence="4">
    <location>
        <begin position="136"/>
        <end position="145"/>
    </location>
</feature>
<feature type="disulfide bond" evidence="4">
    <location>
        <begin position="152"/>
        <end position="163"/>
    </location>
</feature>
<feature type="disulfide bond" evidence="4">
    <location>
        <begin position="157"/>
        <end position="174"/>
    </location>
</feature>
<feature type="disulfide bond" evidence="4">
    <location>
        <begin position="176"/>
        <end position="185"/>
    </location>
</feature>
<feature type="disulfide bond" evidence="5">
    <location>
        <begin position="192"/>
        <end position="274"/>
    </location>
</feature>
<feature type="disulfide bond" evidence="5">
    <location>
        <begin position="213"/>
        <end position="255"/>
    </location>
</feature>
<feature type="disulfide bond" evidence="5">
    <location>
        <begin position="244"/>
        <end position="269"/>
    </location>
</feature>
<feature type="disulfide bond" evidence="1">
    <location>
        <begin position="299"/>
        <end position="433"/>
    </location>
</feature>
<feature type="disulfide bond" description="Interchain (with C-521)" evidence="1">
    <location>
        <position position="299"/>
    </location>
</feature>
<feature type="disulfide bond" evidence="1 6">
    <location>
        <begin position="345"/>
        <end position="361"/>
    </location>
</feature>
<feature type="disulfide bond" evidence="1">
    <location>
        <begin position="353"/>
        <end position="422"/>
    </location>
</feature>
<feature type="disulfide bond" description="Interchain (with C-394)" evidence="1">
    <location>
        <position position="433"/>
    </location>
</feature>
<feature type="disulfide bond" evidence="1 6">
    <location>
        <begin position="445"/>
        <end position="513"/>
    </location>
</feature>
<feature type="disulfide bond" evidence="1 6">
    <location>
        <begin position="475"/>
        <end position="491"/>
    </location>
</feature>
<feature type="disulfide bond" evidence="1 6">
    <location>
        <begin position="503"/>
        <end position="531"/>
    </location>
</feature>
<sequence length="558" mass="62441">MFARMSDLHVLLLMVLAGKTAFGLSLLSFLTEPDPDWTPDQYEYSQEYNNQEENASSTTAYSDNPDWYYEEDDPCLSNPCTHGGDCLVSGATFTCRCPDPFSGNRCQNVQNKCKNNPCGRGDCLITQSPPYHRCACKHPYRGSDCSRVVPVCRPNPCQNGGTCSRQRRRSKFTCACPDQFKGKLCEIGPDDCYVDDGYSYRGRVSKTIHQHTCLYWNSHLLLQEKYNMFMEDAEAHGIGEHNFCRNPDGDKKPWCFIKVNNVKVKWEYCDVPACSALDVANPEGRPTEPLTKFPEFGSCGRTEIAEKKVKRIFGGFKSTAGKHPWQASLQTSLRLTVSTPQGHYCGGALIHPCWVLTAAHCTEIKTKYLKVVLGDQDLTKTEFHEQSFGVQKIFKYSHYIEIDDIPYNDIALLKLKPVDGHCALESKYVKTVCLPDGPFLSGTECYISGWGVTETGEGSRHLLDAKVKLISNTICNSRQLYDHSIDDNMICAGNLQKPGQDSCQGDSGGPLTCEKDGTSYIYGIVSWGLECGKRPGVYTQVTKFLTWIKATMEKEASF</sequence>
<keyword id="KW-0165">Cleavage on pair of basic residues</keyword>
<keyword id="KW-1015">Disulfide bond</keyword>
<keyword id="KW-0245">EGF-like domain</keyword>
<keyword id="KW-0325">Glycoprotein</keyword>
<keyword id="KW-0378">Hydrolase</keyword>
<keyword id="KW-0420">Kringle</keyword>
<keyword id="KW-0645">Protease</keyword>
<keyword id="KW-1185">Reference proteome</keyword>
<keyword id="KW-0677">Repeat</keyword>
<keyword id="KW-0964">Secreted</keyword>
<keyword id="KW-0720">Serine protease</keyword>
<keyword id="KW-0732">Signal</keyword>
<evidence type="ECO:0000250" key="1">
    <source>
        <dbReference type="UniProtKB" id="Q04756"/>
    </source>
</evidence>
<evidence type="ECO:0000250" key="2">
    <source>
        <dbReference type="UniProtKB" id="Q14520"/>
    </source>
</evidence>
<evidence type="ECO:0000255" key="3"/>
<evidence type="ECO:0000255" key="4">
    <source>
        <dbReference type="PROSITE-ProRule" id="PRU00076"/>
    </source>
</evidence>
<evidence type="ECO:0000255" key="5">
    <source>
        <dbReference type="PROSITE-ProRule" id="PRU00121"/>
    </source>
</evidence>
<evidence type="ECO:0000255" key="6">
    <source>
        <dbReference type="PROSITE-ProRule" id="PRU00274"/>
    </source>
</evidence>
<accession>Q5E9Z2</accession>
<accession>Q3MHK6</accession>
<proteinExistence type="evidence at transcript level"/>
<comment type="function">
    <text evidence="2">Cleaves the alpha-chain at multiple sites and the beta-chain between 'Lys-53' and 'Lys-54' but not the gamma-chain of fibrinogen and therefore does not initiate the formation of the fibrin clot and does not cause the fibrinolysis directly. It does not cleave (activate) prothrombin and plasminogen but converts the inactive single chain urinary plasminogen activator (pro-urokinase) to the active two chain form. Activates coagulation factor VII. May function as a tumor suppressor negatively regulating cell proliferation and cell migration.</text>
</comment>
<comment type="subunit">
    <text evidence="2">Heterodimer; disulfide-linked. Heterodimer of a 50 kDa heavy and a 27 kDa light chain linked by a disulfide bond.</text>
</comment>
<comment type="subcellular location">
    <subcellularLocation>
        <location evidence="2">Secreted</location>
    </subcellularLocation>
    <text evidence="2">Secreted as an inactive single-chain precursor and is then activated to a heterodimeric form.</text>
</comment>
<comment type="PTM">
    <text evidence="2">Proteolytic cleavage at Gly-23 or Leu-27 can give rise to the 50 kDa heavy chain (HC) and cleavage at Arg-311 or Lys-317 can give rise to the 27 kDa light chain (LC). The HC can undergo further proteolytic cleavage giving rise to a 26 kDa fragment. The LC can undergo further proteolytic cleavage at Arg-311 leading to a 17-kDa fragment and at Arg-478 leading to a 8-kDa fragment.</text>
</comment>
<comment type="similarity">
    <text evidence="6">Belongs to the peptidase S1 family.</text>
</comment>